<name>ATPA2_MYCPU</name>
<organism>
    <name type="scientific">Mycoplasmopsis pulmonis (strain UAB CTIP)</name>
    <name type="common">Mycoplasma pulmonis</name>
    <dbReference type="NCBI Taxonomy" id="272635"/>
    <lineage>
        <taxon>Bacteria</taxon>
        <taxon>Bacillati</taxon>
        <taxon>Mycoplasmatota</taxon>
        <taxon>Mycoplasmoidales</taxon>
        <taxon>Metamycoplasmataceae</taxon>
        <taxon>Mycoplasmopsis</taxon>
    </lineage>
</organism>
<proteinExistence type="inferred from homology"/>
<evidence type="ECO:0000255" key="1">
    <source>
        <dbReference type="HAMAP-Rule" id="MF_01346"/>
    </source>
</evidence>
<reference key="1">
    <citation type="journal article" date="2001" name="Nucleic Acids Res.">
        <title>The complete genome sequence of the murine respiratory pathogen Mycoplasma pulmonis.</title>
        <authorList>
            <person name="Chambaud I."/>
            <person name="Heilig R."/>
            <person name="Ferris S."/>
            <person name="Barbe V."/>
            <person name="Samson D."/>
            <person name="Galisson F."/>
            <person name="Moszer I."/>
            <person name="Dybvig K."/>
            <person name="Wroblewski H."/>
            <person name="Viari A."/>
            <person name="Rocha E.P.C."/>
            <person name="Blanchard A."/>
        </authorList>
    </citation>
    <scope>NUCLEOTIDE SEQUENCE [LARGE SCALE GENOMIC DNA]</scope>
    <source>
        <strain>UAB CTIP</strain>
    </source>
</reference>
<keyword id="KW-0066">ATP synthesis</keyword>
<keyword id="KW-0067">ATP-binding</keyword>
<keyword id="KW-1003">Cell membrane</keyword>
<keyword id="KW-0139">CF(1)</keyword>
<keyword id="KW-0375">Hydrogen ion transport</keyword>
<keyword id="KW-0406">Ion transport</keyword>
<keyword id="KW-0472">Membrane</keyword>
<keyword id="KW-0547">Nucleotide-binding</keyword>
<keyword id="KW-1185">Reference proteome</keyword>
<keyword id="KW-1278">Translocase</keyword>
<keyword id="KW-0813">Transport</keyword>
<sequence length="513" mass="58129">MDNAKIVIKSIKDYIVEVQGDYDFRLYEVFQLTDDVKGFCLSVDEKRTFLLIDGDTSKIKVGTEIIPLESRFIAKTYKDYFGKIIDIDGKVLYSESEDQEISEKAYENENSAFKVASGIQDRVKLNEPLETGIFSIDILLPIGKGQRQLILGDSKTGKTSIALSTMINQKENDIKIIYVSIGLKSNDLKRIYKTIVEQKIAHKTILMHASSDNSFQQFLIPYVAMAHAENIMQSGEDVLIIFDDLTNHANVLREIALLTGKPVGKEAFPGDLFYSHSKLLERAGKFKNGYSITCFPIVRTINNDMTSLLASNIASITDGQIVTNSEIKDQGILPAIDIGLSVSRTGSSVQSVSLSKIAIEISKIYSKYKQNEKFSDTNFDLNDSVRDIIKKGKILLKILNQKEFQAYSRSFNLIIAYIVVWGIFEDEEKIYDKLIYLYFVLRYDYIGKILVNVVDKKSGVDGMVDEGVLKAEIMRLLAHFKDIHNIKTKSYNDGKFNLSTRVLHKVKDRIWEK</sequence>
<dbReference type="EC" id="7.1.2.2" evidence="1"/>
<dbReference type="EMBL" id="AL445564">
    <property type="protein sequence ID" value="CAC13622.1"/>
    <property type="molecule type" value="Genomic_DNA"/>
</dbReference>
<dbReference type="PIR" id="A99568">
    <property type="entry name" value="A99568"/>
</dbReference>
<dbReference type="RefSeq" id="WP_010925250.1">
    <property type="nucleotide sequence ID" value="NC_002771.1"/>
</dbReference>
<dbReference type="SMR" id="Q98QB7"/>
<dbReference type="STRING" id="272635.gene:17577050"/>
<dbReference type="KEGG" id="mpu:MYPU_4490"/>
<dbReference type="eggNOG" id="COG0056">
    <property type="taxonomic scope" value="Bacteria"/>
</dbReference>
<dbReference type="HOGENOM" id="CLU_010091_0_0_14"/>
<dbReference type="BioCyc" id="MPUL272635:G1GT6-454-MONOMER"/>
<dbReference type="Proteomes" id="UP000000528">
    <property type="component" value="Chromosome"/>
</dbReference>
<dbReference type="GO" id="GO:0005886">
    <property type="term" value="C:plasma membrane"/>
    <property type="evidence" value="ECO:0007669"/>
    <property type="project" value="UniProtKB-SubCell"/>
</dbReference>
<dbReference type="GO" id="GO:0045259">
    <property type="term" value="C:proton-transporting ATP synthase complex"/>
    <property type="evidence" value="ECO:0007669"/>
    <property type="project" value="UniProtKB-KW"/>
</dbReference>
<dbReference type="GO" id="GO:0043531">
    <property type="term" value="F:ADP binding"/>
    <property type="evidence" value="ECO:0007669"/>
    <property type="project" value="TreeGrafter"/>
</dbReference>
<dbReference type="GO" id="GO:0005524">
    <property type="term" value="F:ATP binding"/>
    <property type="evidence" value="ECO:0007669"/>
    <property type="project" value="UniProtKB-UniRule"/>
</dbReference>
<dbReference type="GO" id="GO:0046933">
    <property type="term" value="F:proton-transporting ATP synthase activity, rotational mechanism"/>
    <property type="evidence" value="ECO:0007669"/>
    <property type="project" value="UniProtKB-UniRule"/>
</dbReference>
<dbReference type="CDD" id="cd01132">
    <property type="entry name" value="F1-ATPase_alpha_CD"/>
    <property type="match status" value="1"/>
</dbReference>
<dbReference type="FunFam" id="3.40.50.300:FF:002432">
    <property type="entry name" value="ATP synthase subunit alpha, mitochondrial"/>
    <property type="match status" value="1"/>
</dbReference>
<dbReference type="Gene3D" id="3.40.50.12240">
    <property type="match status" value="1"/>
</dbReference>
<dbReference type="HAMAP" id="MF_01346">
    <property type="entry name" value="ATP_synth_alpha_bact"/>
    <property type="match status" value="1"/>
</dbReference>
<dbReference type="InterPro" id="IPR000793">
    <property type="entry name" value="ATP_synth_asu_C"/>
</dbReference>
<dbReference type="InterPro" id="IPR033732">
    <property type="entry name" value="ATP_synth_F1_a_nt-bd_dom"/>
</dbReference>
<dbReference type="InterPro" id="IPR005294">
    <property type="entry name" value="ATP_synth_F1_asu"/>
</dbReference>
<dbReference type="InterPro" id="IPR020003">
    <property type="entry name" value="ATPase_a/bsu_AS"/>
</dbReference>
<dbReference type="InterPro" id="IPR036121">
    <property type="entry name" value="ATPase_F1/V1/A1_a/bsu_N_sf"/>
</dbReference>
<dbReference type="InterPro" id="IPR000194">
    <property type="entry name" value="ATPase_F1/V1/A1_a/bsu_nucl-bd"/>
</dbReference>
<dbReference type="InterPro" id="IPR027417">
    <property type="entry name" value="P-loop_NTPase"/>
</dbReference>
<dbReference type="NCBIfam" id="NF045936">
    <property type="entry name" value="MSC_0619_alpha"/>
    <property type="match status" value="1"/>
</dbReference>
<dbReference type="NCBIfam" id="NF005523">
    <property type="entry name" value="PRK07165.1"/>
    <property type="match status" value="1"/>
</dbReference>
<dbReference type="PANTHER" id="PTHR48082">
    <property type="entry name" value="ATP SYNTHASE SUBUNIT ALPHA, MITOCHONDRIAL"/>
    <property type="match status" value="1"/>
</dbReference>
<dbReference type="PANTHER" id="PTHR48082:SF2">
    <property type="entry name" value="ATP SYNTHASE SUBUNIT ALPHA, MITOCHONDRIAL"/>
    <property type="match status" value="1"/>
</dbReference>
<dbReference type="Pfam" id="PF00006">
    <property type="entry name" value="ATP-synt_ab"/>
    <property type="match status" value="1"/>
</dbReference>
<dbReference type="Pfam" id="PF00306">
    <property type="entry name" value="ATP-synt_ab_C"/>
    <property type="match status" value="1"/>
</dbReference>
<dbReference type="SUPFAM" id="SSF47917">
    <property type="entry name" value="C-terminal domain of alpha and beta subunits of F1 ATP synthase"/>
    <property type="match status" value="1"/>
</dbReference>
<dbReference type="SUPFAM" id="SSF50615">
    <property type="entry name" value="N-terminal domain of alpha and beta subunits of F1 ATP synthase"/>
    <property type="match status" value="1"/>
</dbReference>
<dbReference type="SUPFAM" id="SSF52540">
    <property type="entry name" value="P-loop containing nucleoside triphosphate hydrolases"/>
    <property type="match status" value="1"/>
</dbReference>
<dbReference type="PROSITE" id="PS00152">
    <property type="entry name" value="ATPASE_ALPHA_BETA"/>
    <property type="match status" value="1"/>
</dbReference>
<gene>
    <name evidence="1" type="primary">atpA2</name>
    <name type="ordered locus">MYPU_4490</name>
</gene>
<feature type="chain" id="PRO_0000144338" description="ATP synthase subunit alpha 2">
    <location>
        <begin position="1"/>
        <end position="513"/>
    </location>
</feature>
<feature type="binding site" evidence="1">
    <location>
        <begin position="152"/>
        <end position="159"/>
    </location>
    <ligand>
        <name>ATP</name>
        <dbReference type="ChEBI" id="CHEBI:30616"/>
    </ligand>
</feature>
<feature type="site" description="Required for activity" evidence="1">
    <location>
        <position position="341"/>
    </location>
</feature>
<protein>
    <recommendedName>
        <fullName evidence="1">ATP synthase subunit alpha 2</fullName>
        <ecNumber evidence="1">7.1.2.2</ecNumber>
    </recommendedName>
    <alternativeName>
        <fullName evidence="1">ATP synthase F1 sector subunit alpha 2</fullName>
    </alternativeName>
    <alternativeName>
        <fullName evidence="1">F-ATPase subunit alpha 2</fullName>
    </alternativeName>
</protein>
<comment type="function">
    <text evidence="1">Produces ATP from ADP in the presence of a proton gradient across the membrane. The alpha chain is a regulatory subunit.</text>
</comment>
<comment type="catalytic activity">
    <reaction evidence="1">
        <text>ATP + H2O + 4 H(+)(in) = ADP + phosphate + 5 H(+)(out)</text>
        <dbReference type="Rhea" id="RHEA:57720"/>
        <dbReference type="ChEBI" id="CHEBI:15377"/>
        <dbReference type="ChEBI" id="CHEBI:15378"/>
        <dbReference type="ChEBI" id="CHEBI:30616"/>
        <dbReference type="ChEBI" id="CHEBI:43474"/>
        <dbReference type="ChEBI" id="CHEBI:456216"/>
        <dbReference type="EC" id="7.1.2.2"/>
    </reaction>
</comment>
<comment type="subunit">
    <text evidence="1">F-type ATPases have 2 components, CF(1) - the catalytic core - and CF(0) - the membrane proton channel. CF(1) has five subunits: alpha(3), beta(3), gamma(1), delta(1), epsilon(1). CF(0) has three main subunits: a(1), b(2) and c(9-12). The alpha and beta chains form an alternating ring which encloses part of the gamma chain. CF(1) is attached to CF(0) by a central stalk formed by the gamma and epsilon chains, while a peripheral stalk is formed by the delta and b chains.</text>
</comment>
<comment type="subcellular location">
    <subcellularLocation>
        <location evidence="1">Cell membrane</location>
        <topology evidence="1">Peripheral membrane protein</topology>
    </subcellularLocation>
</comment>
<comment type="similarity">
    <text evidence="1">Belongs to the ATPase alpha/beta chains family.</text>
</comment>
<accession>Q98QB7</accession>